<name>PURA_PSEE4</name>
<dbReference type="EC" id="6.3.4.4" evidence="1"/>
<dbReference type="EMBL" id="CT573326">
    <property type="protein sequence ID" value="CAK17582.1"/>
    <property type="molecule type" value="Genomic_DNA"/>
</dbReference>
<dbReference type="RefSeq" id="WP_011535943.1">
    <property type="nucleotide sequence ID" value="NC_008027.1"/>
</dbReference>
<dbReference type="SMR" id="Q1I454"/>
<dbReference type="STRING" id="384676.PSEEN4938"/>
<dbReference type="GeneID" id="32807886"/>
<dbReference type="KEGG" id="pen:PSEEN4938"/>
<dbReference type="eggNOG" id="COG0104">
    <property type="taxonomic scope" value="Bacteria"/>
</dbReference>
<dbReference type="HOGENOM" id="CLU_029848_0_0_6"/>
<dbReference type="OrthoDB" id="9807553at2"/>
<dbReference type="UniPathway" id="UPA00075">
    <property type="reaction ID" value="UER00335"/>
</dbReference>
<dbReference type="Proteomes" id="UP000000658">
    <property type="component" value="Chromosome"/>
</dbReference>
<dbReference type="GO" id="GO:0005737">
    <property type="term" value="C:cytoplasm"/>
    <property type="evidence" value="ECO:0007669"/>
    <property type="project" value="UniProtKB-SubCell"/>
</dbReference>
<dbReference type="GO" id="GO:0004019">
    <property type="term" value="F:adenylosuccinate synthase activity"/>
    <property type="evidence" value="ECO:0007669"/>
    <property type="project" value="UniProtKB-UniRule"/>
</dbReference>
<dbReference type="GO" id="GO:0005525">
    <property type="term" value="F:GTP binding"/>
    <property type="evidence" value="ECO:0007669"/>
    <property type="project" value="UniProtKB-UniRule"/>
</dbReference>
<dbReference type="GO" id="GO:0000287">
    <property type="term" value="F:magnesium ion binding"/>
    <property type="evidence" value="ECO:0007669"/>
    <property type="project" value="UniProtKB-UniRule"/>
</dbReference>
<dbReference type="GO" id="GO:0044208">
    <property type="term" value="P:'de novo' AMP biosynthetic process"/>
    <property type="evidence" value="ECO:0007669"/>
    <property type="project" value="UniProtKB-UniRule"/>
</dbReference>
<dbReference type="GO" id="GO:0046040">
    <property type="term" value="P:IMP metabolic process"/>
    <property type="evidence" value="ECO:0007669"/>
    <property type="project" value="TreeGrafter"/>
</dbReference>
<dbReference type="CDD" id="cd03108">
    <property type="entry name" value="AdSS"/>
    <property type="match status" value="1"/>
</dbReference>
<dbReference type="FunFam" id="1.10.300.10:FF:000001">
    <property type="entry name" value="Adenylosuccinate synthetase"/>
    <property type="match status" value="1"/>
</dbReference>
<dbReference type="FunFam" id="3.90.170.10:FF:000001">
    <property type="entry name" value="Adenylosuccinate synthetase"/>
    <property type="match status" value="1"/>
</dbReference>
<dbReference type="Gene3D" id="3.40.440.10">
    <property type="entry name" value="Adenylosuccinate Synthetase, subunit A, domain 1"/>
    <property type="match status" value="1"/>
</dbReference>
<dbReference type="Gene3D" id="1.10.300.10">
    <property type="entry name" value="Adenylosuccinate Synthetase, subunit A, domain 2"/>
    <property type="match status" value="1"/>
</dbReference>
<dbReference type="Gene3D" id="3.90.170.10">
    <property type="entry name" value="Adenylosuccinate Synthetase, subunit A, domain 3"/>
    <property type="match status" value="1"/>
</dbReference>
<dbReference type="HAMAP" id="MF_00011">
    <property type="entry name" value="Adenylosucc_synth"/>
    <property type="match status" value="1"/>
</dbReference>
<dbReference type="InterPro" id="IPR018220">
    <property type="entry name" value="Adenylosuccin_syn_GTP-bd"/>
</dbReference>
<dbReference type="InterPro" id="IPR033128">
    <property type="entry name" value="Adenylosuccin_syn_Lys_AS"/>
</dbReference>
<dbReference type="InterPro" id="IPR042109">
    <property type="entry name" value="Adenylosuccinate_synth_dom1"/>
</dbReference>
<dbReference type="InterPro" id="IPR042110">
    <property type="entry name" value="Adenylosuccinate_synth_dom2"/>
</dbReference>
<dbReference type="InterPro" id="IPR042111">
    <property type="entry name" value="Adenylosuccinate_synth_dom3"/>
</dbReference>
<dbReference type="InterPro" id="IPR001114">
    <property type="entry name" value="Adenylosuccinate_synthetase"/>
</dbReference>
<dbReference type="InterPro" id="IPR027417">
    <property type="entry name" value="P-loop_NTPase"/>
</dbReference>
<dbReference type="NCBIfam" id="NF002223">
    <property type="entry name" value="PRK01117.1"/>
    <property type="match status" value="1"/>
</dbReference>
<dbReference type="NCBIfam" id="TIGR00184">
    <property type="entry name" value="purA"/>
    <property type="match status" value="1"/>
</dbReference>
<dbReference type="PANTHER" id="PTHR11846">
    <property type="entry name" value="ADENYLOSUCCINATE SYNTHETASE"/>
    <property type="match status" value="1"/>
</dbReference>
<dbReference type="PANTHER" id="PTHR11846:SF0">
    <property type="entry name" value="ADENYLOSUCCINATE SYNTHETASE"/>
    <property type="match status" value="1"/>
</dbReference>
<dbReference type="Pfam" id="PF00709">
    <property type="entry name" value="Adenylsucc_synt"/>
    <property type="match status" value="1"/>
</dbReference>
<dbReference type="SMART" id="SM00788">
    <property type="entry name" value="Adenylsucc_synt"/>
    <property type="match status" value="1"/>
</dbReference>
<dbReference type="SUPFAM" id="SSF52540">
    <property type="entry name" value="P-loop containing nucleoside triphosphate hydrolases"/>
    <property type="match status" value="1"/>
</dbReference>
<dbReference type="PROSITE" id="PS01266">
    <property type="entry name" value="ADENYLOSUCCIN_SYN_1"/>
    <property type="match status" value="1"/>
</dbReference>
<dbReference type="PROSITE" id="PS00513">
    <property type="entry name" value="ADENYLOSUCCIN_SYN_2"/>
    <property type="match status" value="1"/>
</dbReference>
<sequence length="430" mass="46789">MGKNVVVLGTQWGDEGKGKIVDLLTEHAAAVVRYQGGHNAGHTLVINGEKTVLHLIPSGILREGVQCLIGNGVVVAPDALMREITKLEEKGVPVRERLRISPAAPLILSYHVALDQAREKARGEAKIGTTGRGIGPAYEDKVARRGLRVGDLFHRERFAAKLGELLDYHNFQLVNYYKEPAIDFQQTLDECMAYAEQLKPMMLDVTAELHNLRRAGKDIMFEGAQGSLLDIDHGTYPYVTSSNTTAGGISTGSGVGPMYLDYILGITKAYTTRVGSGPFPTELFDETGATLAKRGHEFGSTTGRARRCGWFDAVILRRAIDVNSISGICLTKLDVLDGLETINICVGYKNENGAVIDAPSDADSYIGLEPVYEQMPGWSESTLGVKTLEELPEAARAYIKRIEELVGAPIDIISTGPDRNETIVLRHPFA</sequence>
<organism>
    <name type="scientific">Pseudomonas entomophila (strain L48)</name>
    <dbReference type="NCBI Taxonomy" id="384676"/>
    <lineage>
        <taxon>Bacteria</taxon>
        <taxon>Pseudomonadati</taxon>
        <taxon>Pseudomonadota</taxon>
        <taxon>Gammaproteobacteria</taxon>
        <taxon>Pseudomonadales</taxon>
        <taxon>Pseudomonadaceae</taxon>
        <taxon>Pseudomonas</taxon>
    </lineage>
</organism>
<comment type="function">
    <text evidence="1">Plays an important role in the de novo pathway of purine nucleotide biosynthesis. Catalyzes the first committed step in the biosynthesis of AMP from IMP.</text>
</comment>
<comment type="catalytic activity">
    <reaction evidence="1">
        <text>IMP + L-aspartate + GTP = N(6)-(1,2-dicarboxyethyl)-AMP + GDP + phosphate + 2 H(+)</text>
        <dbReference type="Rhea" id="RHEA:15753"/>
        <dbReference type="ChEBI" id="CHEBI:15378"/>
        <dbReference type="ChEBI" id="CHEBI:29991"/>
        <dbReference type="ChEBI" id="CHEBI:37565"/>
        <dbReference type="ChEBI" id="CHEBI:43474"/>
        <dbReference type="ChEBI" id="CHEBI:57567"/>
        <dbReference type="ChEBI" id="CHEBI:58053"/>
        <dbReference type="ChEBI" id="CHEBI:58189"/>
        <dbReference type="EC" id="6.3.4.4"/>
    </reaction>
</comment>
<comment type="cofactor">
    <cofactor evidence="1">
        <name>Mg(2+)</name>
        <dbReference type="ChEBI" id="CHEBI:18420"/>
    </cofactor>
    <text evidence="1">Binds 1 Mg(2+) ion per subunit.</text>
</comment>
<comment type="pathway">
    <text evidence="1">Purine metabolism; AMP biosynthesis via de novo pathway; AMP from IMP: step 1/2.</text>
</comment>
<comment type="subunit">
    <text evidence="1">Homodimer.</text>
</comment>
<comment type="subcellular location">
    <subcellularLocation>
        <location evidence="1">Cytoplasm</location>
    </subcellularLocation>
</comment>
<comment type="similarity">
    <text evidence="1">Belongs to the adenylosuccinate synthetase family.</text>
</comment>
<protein>
    <recommendedName>
        <fullName evidence="1">Adenylosuccinate synthetase</fullName>
        <shortName evidence="1">AMPSase</shortName>
        <shortName evidence="1">AdSS</shortName>
        <ecNumber evidence="1">6.3.4.4</ecNumber>
    </recommendedName>
    <alternativeName>
        <fullName evidence="1">IMP--aspartate ligase</fullName>
    </alternativeName>
</protein>
<evidence type="ECO:0000255" key="1">
    <source>
        <dbReference type="HAMAP-Rule" id="MF_00011"/>
    </source>
</evidence>
<feature type="chain" id="PRO_1000000896" description="Adenylosuccinate synthetase">
    <location>
        <begin position="1"/>
        <end position="430"/>
    </location>
</feature>
<feature type="active site" description="Proton acceptor" evidence="1">
    <location>
        <position position="14"/>
    </location>
</feature>
<feature type="active site" description="Proton donor" evidence="1">
    <location>
        <position position="42"/>
    </location>
</feature>
<feature type="binding site" evidence="1">
    <location>
        <begin position="13"/>
        <end position="19"/>
    </location>
    <ligand>
        <name>GTP</name>
        <dbReference type="ChEBI" id="CHEBI:37565"/>
    </ligand>
</feature>
<feature type="binding site" description="in other chain" evidence="1">
    <location>
        <begin position="14"/>
        <end position="17"/>
    </location>
    <ligand>
        <name>IMP</name>
        <dbReference type="ChEBI" id="CHEBI:58053"/>
        <note>ligand shared between dimeric partners</note>
    </ligand>
</feature>
<feature type="binding site" evidence="1">
    <location>
        <position position="14"/>
    </location>
    <ligand>
        <name>Mg(2+)</name>
        <dbReference type="ChEBI" id="CHEBI:18420"/>
    </ligand>
</feature>
<feature type="binding site" description="in other chain" evidence="1">
    <location>
        <begin position="39"/>
        <end position="42"/>
    </location>
    <ligand>
        <name>IMP</name>
        <dbReference type="ChEBI" id="CHEBI:58053"/>
        <note>ligand shared between dimeric partners</note>
    </ligand>
</feature>
<feature type="binding site" evidence="1">
    <location>
        <begin position="41"/>
        <end position="43"/>
    </location>
    <ligand>
        <name>GTP</name>
        <dbReference type="ChEBI" id="CHEBI:37565"/>
    </ligand>
</feature>
<feature type="binding site" evidence="1">
    <location>
        <position position="41"/>
    </location>
    <ligand>
        <name>Mg(2+)</name>
        <dbReference type="ChEBI" id="CHEBI:18420"/>
    </ligand>
</feature>
<feature type="binding site" description="in other chain" evidence="1">
    <location>
        <position position="130"/>
    </location>
    <ligand>
        <name>IMP</name>
        <dbReference type="ChEBI" id="CHEBI:58053"/>
        <note>ligand shared between dimeric partners</note>
    </ligand>
</feature>
<feature type="binding site" evidence="1">
    <location>
        <position position="144"/>
    </location>
    <ligand>
        <name>IMP</name>
        <dbReference type="ChEBI" id="CHEBI:58053"/>
        <note>ligand shared between dimeric partners</note>
    </ligand>
</feature>
<feature type="binding site" description="in other chain" evidence="1">
    <location>
        <position position="225"/>
    </location>
    <ligand>
        <name>IMP</name>
        <dbReference type="ChEBI" id="CHEBI:58053"/>
        <note>ligand shared between dimeric partners</note>
    </ligand>
</feature>
<feature type="binding site" description="in other chain" evidence="1">
    <location>
        <position position="240"/>
    </location>
    <ligand>
        <name>IMP</name>
        <dbReference type="ChEBI" id="CHEBI:58053"/>
        <note>ligand shared between dimeric partners</note>
    </ligand>
</feature>
<feature type="binding site" evidence="1">
    <location>
        <begin position="300"/>
        <end position="306"/>
    </location>
    <ligand>
        <name>substrate</name>
    </ligand>
</feature>
<feature type="binding site" description="in other chain" evidence="1">
    <location>
        <position position="304"/>
    </location>
    <ligand>
        <name>IMP</name>
        <dbReference type="ChEBI" id="CHEBI:58053"/>
        <note>ligand shared between dimeric partners</note>
    </ligand>
</feature>
<feature type="binding site" evidence="1">
    <location>
        <position position="306"/>
    </location>
    <ligand>
        <name>GTP</name>
        <dbReference type="ChEBI" id="CHEBI:37565"/>
    </ligand>
</feature>
<feature type="binding site" evidence="1">
    <location>
        <begin position="332"/>
        <end position="334"/>
    </location>
    <ligand>
        <name>GTP</name>
        <dbReference type="ChEBI" id="CHEBI:37565"/>
    </ligand>
</feature>
<feature type="binding site" evidence="1">
    <location>
        <begin position="414"/>
        <end position="416"/>
    </location>
    <ligand>
        <name>GTP</name>
        <dbReference type="ChEBI" id="CHEBI:37565"/>
    </ligand>
</feature>
<proteinExistence type="inferred from homology"/>
<accession>Q1I454</accession>
<reference key="1">
    <citation type="journal article" date="2006" name="Nat. Biotechnol.">
        <title>Complete genome sequence of the entomopathogenic and metabolically versatile soil bacterium Pseudomonas entomophila.</title>
        <authorList>
            <person name="Vodovar N."/>
            <person name="Vallenet D."/>
            <person name="Cruveiller S."/>
            <person name="Rouy Z."/>
            <person name="Barbe V."/>
            <person name="Acosta C."/>
            <person name="Cattolico L."/>
            <person name="Jubin C."/>
            <person name="Lajus A."/>
            <person name="Segurens B."/>
            <person name="Vacherie B."/>
            <person name="Wincker P."/>
            <person name="Weissenbach J."/>
            <person name="Lemaitre B."/>
            <person name="Medigue C."/>
            <person name="Boccard F."/>
        </authorList>
    </citation>
    <scope>NUCLEOTIDE SEQUENCE [LARGE SCALE GENOMIC DNA]</scope>
    <source>
        <strain>L48</strain>
    </source>
</reference>
<gene>
    <name evidence="1" type="primary">purA</name>
    <name type="ordered locus">PSEEN4938</name>
</gene>
<keyword id="KW-0963">Cytoplasm</keyword>
<keyword id="KW-0342">GTP-binding</keyword>
<keyword id="KW-0436">Ligase</keyword>
<keyword id="KW-0460">Magnesium</keyword>
<keyword id="KW-0479">Metal-binding</keyword>
<keyword id="KW-0547">Nucleotide-binding</keyword>
<keyword id="KW-0658">Purine biosynthesis</keyword>